<name>ICK4_TRILK</name>
<accession>W4VSC0</accession>
<comment type="function">
    <text evidence="4">Ion channel inhibitor.</text>
</comment>
<comment type="subcellular location">
    <subcellularLocation>
        <location evidence="1">Secreted</location>
    </subcellularLocation>
</comment>
<comment type="tissue specificity">
    <text>Expressed by the venom gland.</text>
</comment>
<comment type="domain">
    <text evidence="1">The presence of a 'disulfide through disulfide knot' structurally defines this protein as a knottin.</text>
</comment>
<comment type="similarity">
    <text evidence="4">Belongs to the neurotoxin 10 (Hwtx-1) family. 25 (ICK4) subfamily.</text>
</comment>
<evidence type="ECO:0000250" key="1"/>
<evidence type="ECO:0000255" key="2"/>
<evidence type="ECO:0000303" key="3">
    <source>
    </source>
</evidence>
<evidence type="ECO:0000305" key="4"/>
<feature type="signal peptide" evidence="2">
    <location>
        <begin position="1"/>
        <end position="21"/>
    </location>
</feature>
<feature type="propeptide" id="PRO_0000434824" evidence="4">
    <location>
        <begin position="22"/>
        <end position="50"/>
    </location>
</feature>
<feature type="chain" id="PRO_0000429211" description="U11-barytoxin-Tl1a">
    <location>
        <begin position="51"/>
        <end position="99"/>
    </location>
</feature>
<feature type="disulfide bond" evidence="1">
    <location>
        <begin position="57"/>
        <end position="71"/>
    </location>
</feature>
<feature type="disulfide bond" evidence="1">
    <location>
        <begin position="64"/>
        <end position="76"/>
    </location>
</feature>
<feature type="disulfide bond" evidence="1">
    <location>
        <begin position="70"/>
        <end position="90"/>
    </location>
</feature>
<dbReference type="EMBL" id="GAQE01000007">
    <property type="protein sequence ID" value="JAB84547.1"/>
    <property type="molecule type" value="Transcribed_RNA"/>
</dbReference>
<dbReference type="SMR" id="W4VSC0"/>
<dbReference type="ArachnoServer" id="AS001814">
    <property type="toxin name" value="U11-barytoxin-Tl1a"/>
</dbReference>
<dbReference type="GO" id="GO:0005576">
    <property type="term" value="C:extracellular region"/>
    <property type="evidence" value="ECO:0007669"/>
    <property type="project" value="UniProtKB-SubCell"/>
</dbReference>
<dbReference type="GO" id="GO:0008200">
    <property type="term" value="F:ion channel inhibitor activity"/>
    <property type="evidence" value="ECO:0007669"/>
    <property type="project" value="InterPro"/>
</dbReference>
<dbReference type="GO" id="GO:0090729">
    <property type="term" value="F:toxin activity"/>
    <property type="evidence" value="ECO:0007669"/>
    <property type="project" value="UniProtKB-KW"/>
</dbReference>
<dbReference type="InterPro" id="IPR011696">
    <property type="entry name" value="Huwentoxin-1"/>
</dbReference>
<dbReference type="Pfam" id="PF07740">
    <property type="entry name" value="Toxin_12"/>
    <property type="match status" value="1"/>
</dbReference>
<dbReference type="SUPFAM" id="SSF57059">
    <property type="entry name" value="omega toxin-like"/>
    <property type="match status" value="1"/>
</dbReference>
<proteinExistence type="evidence at transcript level"/>
<keyword id="KW-1015">Disulfide bond</keyword>
<keyword id="KW-0872">Ion channel impairing toxin</keyword>
<keyword id="KW-0960">Knottin</keyword>
<keyword id="KW-0964">Secreted</keyword>
<keyword id="KW-0732">Signal</keyword>
<keyword id="KW-0800">Toxin</keyword>
<organism>
    <name type="scientific">Trittame loki</name>
    <name type="common">Brush-footed trapdoor spider</name>
    <dbReference type="NCBI Taxonomy" id="1295018"/>
    <lineage>
        <taxon>Eukaryota</taxon>
        <taxon>Metazoa</taxon>
        <taxon>Ecdysozoa</taxon>
        <taxon>Arthropoda</taxon>
        <taxon>Chelicerata</taxon>
        <taxon>Arachnida</taxon>
        <taxon>Araneae</taxon>
        <taxon>Mygalomorphae</taxon>
        <taxon>Barychelidae</taxon>
        <taxon>Trittame</taxon>
    </lineage>
</organism>
<reference key="1">
    <citation type="journal article" date="2013" name="Toxins">
        <title>A proteomics and transcriptomics investigation of the venom from the barychelid spider Trittame loki (brush-foot trapdoor).</title>
        <authorList>
            <person name="Undheim E.A."/>
            <person name="Sunagar K."/>
            <person name="Herzig V."/>
            <person name="Kely L."/>
            <person name="Low D.H."/>
            <person name="Jackson T.N."/>
            <person name="Jones A."/>
            <person name="Kurniawan N."/>
            <person name="King G.F."/>
            <person name="Ali S.A."/>
            <person name="Antunes A."/>
            <person name="Ruder T."/>
            <person name="Fry B.G."/>
        </authorList>
    </citation>
    <scope>NUCLEOTIDE SEQUENCE [MRNA]</scope>
    <source>
        <tissue>Venom gland</tissue>
    </source>
</reference>
<sequence>MKTLVLVAVLGLASLYLLSYASEVQQISRDEEDFRALMASFGGIFDTEERGVDKEGCRKMFGDCWGDGDCCLHLGCKTRKLPPWTDKPYCAWDWTFGRK</sequence>
<protein>
    <recommendedName>
        <fullName>U11-barytoxin-Tl1a</fullName>
        <shortName>U11-BATX-Tl1a</shortName>
    </recommendedName>
    <alternativeName>
        <fullName evidence="3">Toxin ICK-4</fullName>
    </alternativeName>
</protein>